<gene>
    <name type="ordered locus">Ldb1586</name>
</gene>
<name>FENR_LACDA</name>
<feature type="chain" id="PRO_0000364851" description="Ferredoxin--NADP reductase">
    <location>
        <begin position="1"/>
        <end position="308"/>
    </location>
</feature>
<feature type="binding site" evidence="1">
    <location>
        <position position="26"/>
    </location>
    <ligand>
        <name>FAD</name>
        <dbReference type="ChEBI" id="CHEBI:57692"/>
    </ligand>
</feature>
<feature type="binding site" evidence="1">
    <location>
        <position position="34"/>
    </location>
    <ligand>
        <name>FAD</name>
        <dbReference type="ChEBI" id="CHEBI:57692"/>
    </ligand>
</feature>
<feature type="binding site" evidence="1">
    <location>
        <position position="39"/>
    </location>
    <ligand>
        <name>FAD</name>
        <dbReference type="ChEBI" id="CHEBI:57692"/>
    </ligand>
</feature>
<feature type="binding site" evidence="1">
    <location>
        <position position="77"/>
    </location>
    <ligand>
        <name>FAD</name>
        <dbReference type="ChEBI" id="CHEBI:57692"/>
    </ligand>
</feature>
<feature type="binding site" evidence="1">
    <location>
        <position position="106"/>
    </location>
    <ligand>
        <name>FAD</name>
        <dbReference type="ChEBI" id="CHEBI:57692"/>
    </ligand>
</feature>
<feature type="binding site" evidence="1">
    <location>
        <position position="266"/>
    </location>
    <ligand>
        <name>FAD</name>
        <dbReference type="ChEBI" id="CHEBI:57692"/>
    </ligand>
</feature>
<feature type="binding site" evidence="1">
    <location>
        <position position="306"/>
    </location>
    <ligand>
        <name>FAD</name>
        <dbReference type="ChEBI" id="CHEBI:57692"/>
    </ligand>
</feature>
<comment type="catalytic activity">
    <reaction evidence="1">
        <text>2 reduced [2Fe-2S]-[ferredoxin] + NADP(+) + H(+) = 2 oxidized [2Fe-2S]-[ferredoxin] + NADPH</text>
        <dbReference type="Rhea" id="RHEA:20125"/>
        <dbReference type="Rhea" id="RHEA-COMP:10000"/>
        <dbReference type="Rhea" id="RHEA-COMP:10001"/>
        <dbReference type="ChEBI" id="CHEBI:15378"/>
        <dbReference type="ChEBI" id="CHEBI:33737"/>
        <dbReference type="ChEBI" id="CHEBI:33738"/>
        <dbReference type="ChEBI" id="CHEBI:57783"/>
        <dbReference type="ChEBI" id="CHEBI:58349"/>
        <dbReference type="EC" id="1.18.1.2"/>
    </reaction>
</comment>
<comment type="cofactor">
    <cofactor evidence="1">
        <name>FAD</name>
        <dbReference type="ChEBI" id="CHEBI:57692"/>
    </cofactor>
    <text evidence="1">Binds 1 FAD per subunit.</text>
</comment>
<comment type="subunit">
    <text evidence="1">Homodimer.</text>
</comment>
<comment type="similarity">
    <text evidence="1">Belongs to the ferredoxin--NADP reductase type 2 family.</text>
</comment>
<dbReference type="EC" id="1.18.1.2" evidence="1"/>
<dbReference type="EMBL" id="CR954253">
    <property type="protein sequence ID" value="CAI98375.1"/>
    <property type="molecule type" value="Genomic_DNA"/>
</dbReference>
<dbReference type="SMR" id="Q1G967"/>
<dbReference type="STRING" id="390333.Ldb1586"/>
<dbReference type="KEGG" id="ldb:Ldb1586"/>
<dbReference type="PATRIC" id="fig|390333.13.peg.1039"/>
<dbReference type="eggNOG" id="COG0492">
    <property type="taxonomic scope" value="Bacteria"/>
</dbReference>
<dbReference type="HOGENOM" id="CLU_031864_5_5_9"/>
<dbReference type="BioCyc" id="LDEL390333:LDB_RS06835-MONOMER"/>
<dbReference type="Proteomes" id="UP000001259">
    <property type="component" value="Chromosome"/>
</dbReference>
<dbReference type="GO" id="GO:0004324">
    <property type="term" value="F:ferredoxin-NADP+ reductase activity"/>
    <property type="evidence" value="ECO:0007669"/>
    <property type="project" value="UniProtKB-UniRule"/>
</dbReference>
<dbReference type="GO" id="GO:0050660">
    <property type="term" value="F:flavin adenine dinucleotide binding"/>
    <property type="evidence" value="ECO:0007669"/>
    <property type="project" value="UniProtKB-UniRule"/>
</dbReference>
<dbReference type="GO" id="GO:0050661">
    <property type="term" value="F:NADP binding"/>
    <property type="evidence" value="ECO:0007669"/>
    <property type="project" value="UniProtKB-UniRule"/>
</dbReference>
<dbReference type="Gene3D" id="3.50.50.60">
    <property type="entry name" value="FAD/NAD(P)-binding domain"/>
    <property type="match status" value="2"/>
</dbReference>
<dbReference type="HAMAP" id="MF_01685">
    <property type="entry name" value="FENR2"/>
    <property type="match status" value="1"/>
</dbReference>
<dbReference type="InterPro" id="IPR036188">
    <property type="entry name" value="FAD/NAD-bd_sf"/>
</dbReference>
<dbReference type="InterPro" id="IPR023753">
    <property type="entry name" value="FAD/NAD-binding_dom"/>
</dbReference>
<dbReference type="InterPro" id="IPR022890">
    <property type="entry name" value="Fd--NADP_Rdtase_type_2"/>
</dbReference>
<dbReference type="InterPro" id="IPR050097">
    <property type="entry name" value="Ferredoxin-NADP_redctase_2"/>
</dbReference>
<dbReference type="PANTHER" id="PTHR48105">
    <property type="entry name" value="THIOREDOXIN REDUCTASE 1-RELATED-RELATED"/>
    <property type="match status" value="1"/>
</dbReference>
<dbReference type="Pfam" id="PF07992">
    <property type="entry name" value="Pyr_redox_2"/>
    <property type="match status" value="1"/>
</dbReference>
<dbReference type="PRINTS" id="PR00368">
    <property type="entry name" value="FADPNR"/>
</dbReference>
<dbReference type="PRINTS" id="PR00469">
    <property type="entry name" value="PNDRDTASEII"/>
</dbReference>
<dbReference type="SUPFAM" id="SSF51905">
    <property type="entry name" value="FAD/NAD(P)-binding domain"/>
    <property type="match status" value="1"/>
</dbReference>
<sequence>MIGAGPVGLFAAYFAHLHGLKTVILESLNEPGGQPEMLYPFKKILDIPVFNEITAADLTKRLLANLTDQDLVTGHKVSQLEKTDEFVIDGEYQVRSIIVATGNGAFKAKKFPLKATPEAEDHIHYFFKNPDLFAGQKIGIFGGGDTALDWAQELSQIADVTLVHRRDQFRGMESSVENLKADQKVTLKTPYLPKSMQVEKGQLEISLKMVGGDEVTQETFDQILVAYGFRADNRFVSKWGVDLDQGLIAVDRSMQTSVPGIYAIGDSCGYPGRVPVIGIGFGEAQIAVNAIMQDLFPEKSLTIHSTSI</sequence>
<organism>
    <name type="scientific">Lactobacillus delbrueckii subsp. bulgaricus (strain ATCC 11842 / DSM 20081 / BCRC 10696 / JCM 1002 / NBRC 13953 / NCIMB 11778 / NCTC 12712 / WDCM 00102 / Lb 14)</name>
    <dbReference type="NCBI Taxonomy" id="390333"/>
    <lineage>
        <taxon>Bacteria</taxon>
        <taxon>Bacillati</taxon>
        <taxon>Bacillota</taxon>
        <taxon>Bacilli</taxon>
        <taxon>Lactobacillales</taxon>
        <taxon>Lactobacillaceae</taxon>
        <taxon>Lactobacillus</taxon>
    </lineage>
</organism>
<proteinExistence type="inferred from homology"/>
<reference key="1">
    <citation type="journal article" date="2006" name="Proc. Natl. Acad. Sci. U.S.A.">
        <title>The complete genome sequence of Lactobacillus bulgaricus reveals extensive and ongoing reductive evolution.</title>
        <authorList>
            <person name="van de Guchte M."/>
            <person name="Penaud S."/>
            <person name="Grimaldi C."/>
            <person name="Barbe V."/>
            <person name="Bryson K."/>
            <person name="Nicolas P."/>
            <person name="Robert C."/>
            <person name="Oztas S."/>
            <person name="Mangenot S."/>
            <person name="Couloux A."/>
            <person name="Loux V."/>
            <person name="Dervyn R."/>
            <person name="Bossy R."/>
            <person name="Bolotin A."/>
            <person name="Batto J.-M."/>
            <person name="Walunas T."/>
            <person name="Gibrat J.-F."/>
            <person name="Bessieres P."/>
            <person name="Weissenbach J."/>
            <person name="Ehrlich S.D."/>
            <person name="Maguin E."/>
        </authorList>
    </citation>
    <scope>NUCLEOTIDE SEQUENCE [LARGE SCALE GENOMIC DNA]</scope>
    <source>
        <strain>ATCC 11842 / DSM 20081 / BCRC 10696 / JCM 1002 / NBRC 13953 / NCIMB 11778 / NCTC 12712 / WDCM 00102 / Lb 14</strain>
    </source>
</reference>
<accession>Q1G967</accession>
<evidence type="ECO:0000255" key="1">
    <source>
        <dbReference type="HAMAP-Rule" id="MF_01685"/>
    </source>
</evidence>
<keyword id="KW-0274">FAD</keyword>
<keyword id="KW-0285">Flavoprotein</keyword>
<keyword id="KW-0521">NADP</keyword>
<keyword id="KW-0560">Oxidoreductase</keyword>
<keyword id="KW-1185">Reference proteome</keyword>
<protein>
    <recommendedName>
        <fullName evidence="1">Ferredoxin--NADP reductase</fullName>
        <shortName evidence="1">FNR</shortName>
        <shortName evidence="1">Fd-NADP(+) reductase</shortName>
        <ecNumber evidence="1">1.18.1.2</ecNumber>
    </recommendedName>
</protein>